<feature type="chain" id="PRO_0000328026" description="Probable importin-5 homolog">
    <location>
        <begin position="1"/>
        <end position="1067"/>
    </location>
</feature>
<feature type="repeat" description="HEAT 1" evidence="2">
    <location>
        <begin position="3"/>
        <end position="34"/>
    </location>
</feature>
<feature type="repeat" description="HEAT 2" evidence="2">
    <location>
        <begin position="42"/>
        <end position="75"/>
    </location>
</feature>
<feature type="repeat" description="HEAT 3" evidence="2">
    <location>
        <begin position="93"/>
        <end position="120"/>
    </location>
</feature>
<feature type="repeat" description="HEAT 4" evidence="2">
    <location>
        <begin position="125"/>
        <end position="152"/>
    </location>
</feature>
<feature type="repeat" description="HEAT 5" evidence="2">
    <location>
        <begin position="164"/>
        <end position="197"/>
    </location>
</feature>
<feature type="repeat" description="HEAT 6" evidence="2">
    <location>
        <begin position="206"/>
        <end position="243"/>
    </location>
</feature>
<feature type="repeat" description="HEAT 7" evidence="2">
    <location>
        <begin position="251"/>
        <end position="286"/>
    </location>
</feature>
<feature type="repeat" description="HEAT 8" evidence="2">
    <location>
        <begin position="295"/>
        <end position="347"/>
    </location>
</feature>
<feature type="repeat" description="HEAT 9" evidence="2">
    <location>
        <begin position="349"/>
        <end position="381"/>
    </location>
</feature>
<feature type="repeat" description="HEAT 10" evidence="2">
    <location>
        <begin position="385"/>
        <end position="425"/>
    </location>
</feature>
<feature type="repeat" description="HEAT 11" evidence="2">
    <location>
        <begin position="427"/>
        <end position="466"/>
    </location>
</feature>
<feature type="repeat" description="HEAT 12" evidence="2">
    <location>
        <begin position="468"/>
        <end position="508"/>
    </location>
</feature>
<feature type="repeat" description="HEAT 13" evidence="2">
    <location>
        <begin position="510"/>
        <end position="553"/>
    </location>
</feature>
<feature type="repeat" description="HEAT 14" evidence="2">
    <location>
        <begin position="555"/>
        <end position="596"/>
    </location>
</feature>
<feature type="repeat" description="HEAT 15" evidence="2">
    <location>
        <begin position="598"/>
        <end position="658"/>
    </location>
</feature>
<feature type="repeat" description="HEAT 16" evidence="2">
    <location>
        <begin position="661"/>
        <end position="703"/>
    </location>
</feature>
<feature type="repeat" description="HEAT 17" evidence="2">
    <location>
        <begin position="718"/>
        <end position="757"/>
    </location>
</feature>
<feature type="repeat" description="HEAT 18" evidence="2">
    <location>
        <begin position="763"/>
        <end position="826"/>
    </location>
</feature>
<feature type="repeat" description="HEAT 19" evidence="2">
    <location>
        <begin position="832"/>
        <end position="869"/>
    </location>
</feature>
<feature type="repeat" description="HEAT 20" evidence="2">
    <location>
        <begin position="876"/>
        <end position="909"/>
    </location>
</feature>
<feature type="repeat" description="HEAT 21" evidence="2">
    <location>
        <begin position="917"/>
        <end position="960"/>
    </location>
</feature>
<feature type="repeat" description="HEAT 22" evidence="2">
    <location>
        <begin position="969"/>
        <end position="999"/>
    </location>
</feature>
<feature type="repeat" description="HEAT 23" evidence="2">
    <location>
        <begin position="1008"/>
        <end position="1040"/>
    </location>
</feature>
<feature type="repeat" description="HEAT 24" evidence="2">
    <location>
        <begin position="1041"/>
        <end position="1064"/>
    </location>
</feature>
<sequence>MNLQPITDLLKALNSGNTTTIQQAEQLYADYKNHQPDQLVNSFIVLIRTSQDELLRSYPPVLLRTLVNGNDSGNILKGLKPETLVTLKTELMFAVREEPKNHIRHSILNVIAILAIQLVPEQKWPEILSFIIESSSSPEENLRESSFYLIGAIIDDSRVAETLAPHFDKFALLVEKGLNDPSAKVQVSALETVSTFIDANPEKAEVFKPLIPAMLNTIQKTIESNLEKEAQKGILTFIIIAQYHSDWFKTNFDMIFKVFFQFLEHQSLEDETKHACLHFFLTFAEFKSSIMKKKLYLEPIVLLLLKWMSSVEDMDLKDWNSLDTEPSDDDDSNVAFEAIEALSHCVSKGLWEFFLQCAPTLLNSGNWKERYTGLMTLSSISEGCEKQIKTNFKLIIQSILPLANDSHPRVRFAFFYCLGSFASYLKREMQDLYKTLIPVSLEHLNDPFPRVTISNCEFLTLFLDEIKPNRVKEFKDQFLGRLSPLLQNENYKIVQHSLNAFSSVVDGIGEEFTQHYSEIMPFLIKILRTQTSVETKTLRGRAIETISLVGLAVGKKVFLNDCIQIIQYVSSLEKFKDDDPQVDFFLRAFTRFAQCLGEDFIPYLKYSMSPLMDAINGKVDSSVENGEDFSDESNNSGSIVMENKAMALEMVSIYAMELKHHLFPYVEQLYKGSIELVDFPFSSLVAIQAVNLIPFLVKISKQHFEAVGGLKDGMKAEFTSRLFLDSYERMAASIKTESEPDTLSAKLKALSDLMDIGGQCEQADRILSLTFEVANESFGTLQELETEYQENIDEEDEDADESPEREIIDDAYNSLAMVLGEVCIQFKEKAVPYIATVLPAMIELIETAPSVEIKTSMICILDDLIENGGQKAFELYPHIIKPMMNCTLPNLDPSLIQSAVFGIGLAAENGKDYFTPFLMESLQLINNVIVSVNSVQEQDDDLIAARDNAISAMGRIITNLPQHLGNNFPQTIALWLSYLPIQDDGEAGSIIKSLCTLIRDFSQQIMTQQYIVKVLEIIAVGLHKKAVNPDDKQIISLALRSQESLVAQSLFQLSAENQAILANFFKN</sequence>
<proteinExistence type="inferred from homology"/>
<evidence type="ECO:0000250" key="1"/>
<evidence type="ECO:0000250" key="2">
    <source>
        <dbReference type="UniProtKB" id="O00410"/>
    </source>
</evidence>
<evidence type="ECO:0000305" key="3"/>
<keyword id="KW-0963">Cytoplasm</keyword>
<keyword id="KW-0539">Nucleus</keyword>
<keyword id="KW-0653">Protein transport</keyword>
<keyword id="KW-1185">Reference proteome</keyword>
<keyword id="KW-0677">Repeat</keyword>
<keyword id="KW-0813">Transport</keyword>
<organism>
    <name type="scientific">Dictyostelium discoideum</name>
    <name type="common">Social amoeba</name>
    <dbReference type="NCBI Taxonomy" id="44689"/>
    <lineage>
        <taxon>Eukaryota</taxon>
        <taxon>Amoebozoa</taxon>
        <taxon>Evosea</taxon>
        <taxon>Eumycetozoa</taxon>
        <taxon>Dictyostelia</taxon>
        <taxon>Dictyosteliales</taxon>
        <taxon>Dictyosteliaceae</taxon>
        <taxon>Dictyostelium</taxon>
    </lineage>
</organism>
<reference key="1">
    <citation type="journal article" date="2005" name="Nature">
        <title>The genome of the social amoeba Dictyostelium discoideum.</title>
        <authorList>
            <person name="Eichinger L."/>
            <person name="Pachebat J.A."/>
            <person name="Gloeckner G."/>
            <person name="Rajandream M.A."/>
            <person name="Sucgang R."/>
            <person name="Berriman M."/>
            <person name="Song J."/>
            <person name="Olsen R."/>
            <person name="Szafranski K."/>
            <person name="Xu Q."/>
            <person name="Tunggal B."/>
            <person name="Kummerfeld S."/>
            <person name="Madera M."/>
            <person name="Konfortov B.A."/>
            <person name="Rivero F."/>
            <person name="Bankier A.T."/>
            <person name="Lehmann R."/>
            <person name="Hamlin N."/>
            <person name="Davies R."/>
            <person name="Gaudet P."/>
            <person name="Fey P."/>
            <person name="Pilcher K."/>
            <person name="Chen G."/>
            <person name="Saunders D."/>
            <person name="Sodergren E.J."/>
            <person name="Davis P."/>
            <person name="Kerhornou A."/>
            <person name="Nie X."/>
            <person name="Hall N."/>
            <person name="Anjard C."/>
            <person name="Hemphill L."/>
            <person name="Bason N."/>
            <person name="Farbrother P."/>
            <person name="Desany B."/>
            <person name="Just E."/>
            <person name="Morio T."/>
            <person name="Rost R."/>
            <person name="Churcher C.M."/>
            <person name="Cooper J."/>
            <person name="Haydock S."/>
            <person name="van Driessche N."/>
            <person name="Cronin A."/>
            <person name="Goodhead I."/>
            <person name="Muzny D.M."/>
            <person name="Mourier T."/>
            <person name="Pain A."/>
            <person name="Lu M."/>
            <person name="Harper D."/>
            <person name="Lindsay R."/>
            <person name="Hauser H."/>
            <person name="James K.D."/>
            <person name="Quiles M."/>
            <person name="Madan Babu M."/>
            <person name="Saito T."/>
            <person name="Buchrieser C."/>
            <person name="Wardroper A."/>
            <person name="Felder M."/>
            <person name="Thangavelu M."/>
            <person name="Johnson D."/>
            <person name="Knights A."/>
            <person name="Loulseged H."/>
            <person name="Mungall K.L."/>
            <person name="Oliver K."/>
            <person name="Price C."/>
            <person name="Quail M.A."/>
            <person name="Urushihara H."/>
            <person name="Hernandez J."/>
            <person name="Rabbinowitsch E."/>
            <person name="Steffen D."/>
            <person name="Sanders M."/>
            <person name="Ma J."/>
            <person name="Kohara Y."/>
            <person name="Sharp S."/>
            <person name="Simmonds M.N."/>
            <person name="Spiegler S."/>
            <person name="Tivey A."/>
            <person name="Sugano S."/>
            <person name="White B."/>
            <person name="Walker D."/>
            <person name="Woodward J.R."/>
            <person name="Winckler T."/>
            <person name="Tanaka Y."/>
            <person name="Shaulsky G."/>
            <person name="Schleicher M."/>
            <person name="Weinstock G.M."/>
            <person name="Rosenthal A."/>
            <person name="Cox E.C."/>
            <person name="Chisholm R.L."/>
            <person name="Gibbs R.A."/>
            <person name="Loomis W.F."/>
            <person name="Platzer M."/>
            <person name="Kay R.R."/>
            <person name="Williams J.G."/>
            <person name="Dear P.H."/>
            <person name="Noegel A.A."/>
            <person name="Barrell B.G."/>
            <person name="Kuspa A."/>
        </authorList>
    </citation>
    <scope>NUCLEOTIDE SEQUENCE [LARGE SCALE GENOMIC DNA]</scope>
    <source>
        <strain>AX4</strain>
    </source>
</reference>
<accession>Q54EW3</accession>
<gene>
    <name type="ORF">DDB_G0291650</name>
</gene>
<comment type="function">
    <text evidence="1">Functions in nuclear protein import as nuclear transport receptor. Serves as receptor for nuclear localization signals (NLS) in cargo substrates (By similarity).</text>
</comment>
<comment type="subcellular location">
    <subcellularLocation>
        <location evidence="1">Cytoplasm</location>
    </subcellularLocation>
    <subcellularLocation>
        <location evidence="1">Nucleus</location>
    </subcellularLocation>
</comment>
<comment type="similarity">
    <text evidence="3">Belongs to the importin beta family. Importin beta-3 subfamily.</text>
</comment>
<dbReference type="EMBL" id="AAFI02000177">
    <property type="protein sequence ID" value="EAL61809.1"/>
    <property type="molecule type" value="Genomic_DNA"/>
</dbReference>
<dbReference type="RefSeq" id="XP_635127.1">
    <property type="nucleotide sequence ID" value="XM_630035.1"/>
</dbReference>
<dbReference type="SMR" id="Q54EW3"/>
<dbReference type="FunCoup" id="Q54EW3">
    <property type="interactions" value="1142"/>
</dbReference>
<dbReference type="STRING" id="44689.Q54EW3"/>
<dbReference type="PaxDb" id="44689-DDB0266483"/>
<dbReference type="EnsemblProtists" id="EAL61809">
    <property type="protein sequence ID" value="EAL61809"/>
    <property type="gene ID" value="DDB_G0291650"/>
</dbReference>
<dbReference type="GeneID" id="8628073"/>
<dbReference type="KEGG" id="ddi:DDB_G0291650"/>
<dbReference type="dictyBase" id="DDB_G0291650"/>
<dbReference type="VEuPathDB" id="AmoebaDB:DDB_G0291650"/>
<dbReference type="eggNOG" id="KOG2171">
    <property type="taxonomic scope" value="Eukaryota"/>
</dbReference>
<dbReference type="HOGENOM" id="CLU_003794_0_1_1"/>
<dbReference type="InParanoid" id="Q54EW3"/>
<dbReference type="OMA" id="PKRFVQE"/>
<dbReference type="PhylomeDB" id="Q54EW3"/>
<dbReference type="PRO" id="PR:Q54EW3"/>
<dbReference type="Proteomes" id="UP000002195">
    <property type="component" value="Chromosome 6"/>
</dbReference>
<dbReference type="GO" id="GO:0005737">
    <property type="term" value="C:cytoplasm"/>
    <property type="evidence" value="ECO:0000318"/>
    <property type="project" value="GO_Central"/>
</dbReference>
<dbReference type="GO" id="GO:0005634">
    <property type="term" value="C:nucleus"/>
    <property type="evidence" value="ECO:0000318"/>
    <property type="project" value="GO_Central"/>
</dbReference>
<dbReference type="GO" id="GO:0061608">
    <property type="term" value="F:nuclear import signal receptor activity"/>
    <property type="evidence" value="ECO:0000318"/>
    <property type="project" value="GO_Central"/>
</dbReference>
<dbReference type="GO" id="GO:0008139">
    <property type="term" value="F:nuclear localization sequence binding"/>
    <property type="evidence" value="ECO:0000318"/>
    <property type="project" value="GO_Central"/>
</dbReference>
<dbReference type="GO" id="GO:0006606">
    <property type="term" value="P:protein import into nucleus"/>
    <property type="evidence" value="ECO:0000318"/>
    <property type="project" value="GO_Central"/>
</dbReference>
<dbReference type="FunFam" id="1.25.10.10:FF:001582">
    <property type="entry name" value="Probable importin-5 homolog"/>
    <property type="match status" value="1"/>
</dbReference>
<dbReference type="Gene3D" id="1.25.10.10">
    <property type="entry name" value="Leucine-rich Repeat Variant"/>
    <property type="match status" value="1"/>
</dbReference>
<dbReference type="InterPro" id="IPR011989">
    <property type="entry name" value="ARM-like"/>
</dbReference>
<dbReference type="InterPro" id="IPR016024">
    <property type="entry name" value="ARM-type_fold"/>
</dbReference>
<dbReference type="InterPro" id="IPR000357">
    <property type="entry name" value="HEAT"/>
</dbReference>
<dbReference type="InterPro" id="IPR040122">
    <property type="entry name" value="Importin_beta"/>
</dbReference>
<dbReference type="InterPro" id="IPR041653">
    <property type="entry name" value="Importin_rep_4"/>
</dbReference>
<dbReference type="InterPro" id="IPR034085">
    <property type="entry name" value="TOG"/>
</dbReference>
<dbReference type="PANTHER" id="PTHR10527">
    <property type="entry name" value="IMPORTIN BETA"/>
    <property type="match status" value="1"/>
</dbReference>
<dbReference type="Pfam" id="PF02985">
    <property type="entry name" value="HEAT"/>
    <property type="match status" value="1"/>
</dbReference>
<dbReference type="Pfam" id="PF18808">
    <property type="entry name" value="Importin_rep_4"/>
    <property type="match status" value="1"/>
</dbReference>
<dbReference type="SMART" id="SM01349">
    <property type="entry name" value="TOG"/>
    <property type="match status" value="1"/>
</dbReference>
<dbReference type="SUPFAM" id="SSF48371">
    <property type="entry name" value="ARM repeat"/>
    <property type="match status" value="2"/>
</dbReference>
<protein>
    <recommendedName>
        <fullName>Probable importin-5 homolog</fullName>
    </recommendedName>
    <alternativeName>
        <fullName>Importin subunit beta-3</fullName>
    </alternativeName>
    <alternativeName>
        <fullName>Karyopherin beta-3</fullName>
    </alternativeName>
</protein>
<name>IPO5_DICDI</name>